<comment type="function">
    <text evidence="1">An aminoacyl-tRNA editing enzyme that deacylates mischarged D-aminoacyl-tRNAs. Also deacylates mischarged glycyl-tRNA(Ala), protecting cells against glycine mischarging by AlaRS. Acts via tRNA-based rather than protein-based catalysis; rejects L-amino acids rather than detecting D-amino acids in the active site. By recycling D-aminoacyl-tRNA to D-amino acids and free tRNA molecules, this enzyme counteracts the toxicity associated with the formation of D-aminoacyl-tRNA entities in vivo and helps enforce protein L-homochirality.</text>
</comment>
<comment type="catalytic activity">
    <reaction evidence="1">
        <text>glycyl-tRNA(Ala) + H2O = tRNA(Ala) + glycine + H(+)</text>
        <dbReference type="Rhea" id="RHEA:53744"/>
        <dbReference type="Rhea" id="RHEA-COMP:9657"/>
        <dbReference type="Rhea" id="RHEA-COMP:13640"/>
        <dbReference type="ChEBI" id="CHEBI:15377"/>
        <dbReference type="ChEBI" id="CHEBI:15378"/>
        <dbReference type="ChEBI" id="CHEBI:57305"/>
        <dbReference type="ChEBI" id="CHEBI:78442"/>
        <dbReference type="ChEBI" id="CHEBI:78522"/>
        <dbReference type="EC" id="3.1.1.96"/>
    </reaction>
</comment>
<comment type="catalytic activity">
    <reaction evidence="1">
        <text>a D-aminoacyl-tRNA + H2O = a tRNA + a D-alpha-amino acid + H(+)</text>
        <dbReference type="Rhea" id="RHEA:13953"/>
        <dbReference type="Rhea" id="RHEA-COMP:10123"/>
        <dbReference type="Rhea" id="RHEA-COMP:10124"/>
        <dbReference type="ChEBI" id="CHEBI:15377"/>
        <dbReference type="ChEBI" id="CHEBI:15378"/>
        <dbReference type="ChEBI" id="CHEBI:59871"/>
        <dbReference type="ChEBI" id="CHEBI:78442"/>
        <dbReference type="ChEBI" id="CHEBI:79333"/>
        <dbReference type="EC" id="3.1.1.96"/>
    </reaction>
</comment>
<comment type="subunit">
    <text evidence="1">Homodimer.</text>
</comment>
<comment type="subcellular location">
    <subcellularLocation>
        <location evidence="1">Cytoplasm</location>
    </subcellularLocation>
</comment>
<comment type="domain">
    <text evidence="1">A Gly-cisPro motif from one monomer fits into the active site of the other monomer to allow specific chiral rejection of L-amino acids.</text>
</comment>
<comment type="similarity">
    <text evidence="1">Belongs to the DTD family.</text>
</comment>
<gene>
    <name evidence="1" type="primary">dtd</name>
    <name type="ordered locus">Bmul_2699</name>
    <name type="ordered locus">BMULJ_00539</name>
</gene>
<sequence length="152" mass="16023">MIALIQRVKRADVRVGERVTGEIGAGLLALVCAERGDTEAAADKLLAKVLGYRVFSDAAGKMNLPVSNIDGAGRAGGLLLVSQFTLAADTNSGLRPSFTPAAPPDEGARLFDYFVAAARARHPIVETGEFGADMQVSLVNDGPVTFWLQVRP</sequence>
<proteinExistence type="inferred from homology"/>
<protein>
    <recommendedName>
        <fullName evidence="1">D-aminoacyl-tRNA deacylase</fullName>
        <shortName evidence="1">DTD</shortName>
        <ecNumber evidence="1">3.1.1.96</ecNumber>
    </recommendedName>
    <alternativeName>
        <fullName evidence="1">Gly-tRNA(Ala) deacylase</fullName>
    </alternativeName>
</protein>
<keyword id="KW-0963">Cytoplasm</keyword>
<keyword id="KW-0378">Hydrolase</keyword>
<keyword id="KW-1185">Reference proteome</keyword>
<keyword id="KW-0694">RNA-binding</keyword>
<keyword id="KW-0820">tRNA-binding</keyword>
<name>DTD_BURM1</name>
<feature type="chain" id="PRO_1000127500" description="D-aminoacyl-tRNA deacylase">
    <location>
        <begin position="1"/>
        <end position="152"/>
    </location>
</feature>
<feature type="short sequence motif" description="Gly-cisPro motif, important for rejection of L-amino acids" evidence="1">
    <location>
        <begin position="142"/>
        <end position="143"/>
    </location>
</feature>
<dbReference type="EC" id="3.1.1.96" evidence="1"/>
<dbReference type="EMBL" id="CP000868">
    <property type="protein sequence ID" value="ABX16383.1"/>
    <property type="molecule type" value="Genomic_DNA"/>
</dbReference>
<dbReference type="EMBL" id="AP009385">
    <property type="protein sequence ID" value="BAG42503.1"/>
    <property type="molecule type" value="Genomic_DNA"/>
</dbReference>
<dbReference type="RefSeq" id="WP_006401684.1">
    <property type="nucleotide sequence ID" value="NC_010804.1"/>
</dbReference>
<dbReference type="SMR" id="A9AH76"/>
<dbReference type="STRING" id="395019.BMULJ_00539"/>
<dbReference type="KEGG" id="bmj:BMULJ_00539"/>
<dbReference type="KEGG" id="bmu:Bmul_2699"/>
<dbReference type="eggNOG" id="COG1490">
    <property type="taxonomic scope" value="Bacteria"/>
</dbReference>
<dbReference type="HOGENOM" id="CLU_076901_1_1_4"/>
<dbReference type="Proteomes" id="UP000008815">
    <property type="component" value="Chromosome 1"/>
</dbReference>
<dbReference type="GO" id="GO:0005737">
    <property type="term" value="C:cytoplasm"/>
    <property type="evidence" value="ECO:0007669"/>
    <property type="project" value="UniProtKB-SubCell"/>
</dbReference>
<dbReference type="GO" id="GO:0051500">
    <property type="term" value="F:D-tyrosyl-tRNA(Tyr) deacylase activity"/>
    <property type="evidence" value="ECO:0007669"/>
    <property type="project" value="TreeGrafter"/>
</dbReference>
<dbReference type="GO" id="GO:0106026">
    <property type="term" value="F:Gly-tRNA(Ala) deacylase activity"/>
    <property type="evidence" value="ECO:0007669"/>
    <property type="project" value="UniProtKB-UniRule"/>
</dbReference>
<dbReference type="GO" id="GO:0043908">
    <property type="term" value="F:Ser(Gly)-tRNA(Ala) hydrolase activity"/>
    <property type="evidence" value="ECO:0007669"/>
    <property type="project" value="UniProtKB-UniRule"/>
</dbReference>
<dbReference type="GO" id="GO:0000049">
    <property type="term" value="F:tRNA binding"/>
    <property type="evidence" value="ECO:0007669"/>
    <property type="project" value="UniProtKB-UniRule"/>
</dbReference>
<dbReference type="GO" id="GO:0019478">
    <property type="term" value="P:D-amino acid catabolic process"/>
    <property type="evidence" value="ECO:0007669"/>
    <property type="project" value="UniProtKB-UniRule"/>
</dbReference>
<dbReference type="CDD" id="cd00563">
    <property type="entry name" value="Dtyr_deacylase"/>
    <property type="match status" value="1"/>
</dbReference>
<dbReference type="FunFam" id="3.50.80.10:FF:000001">
    <property type="entry name" value="D-aminoacyl-tRNA deacylase"/>
    <property type="match status" value="1"/>
</dbReference>
<dbReference type="Gene3D" id="3.50.80.10">
    <property type="entry name" value="D-tyrosyl-tRNA(Tyr) deacylase"/>
    <property type="match status" value="1"/>
</dbReference>
<dbReference type="HAMAP" id="MF_00518">
    <property type="entry name" value="Deacylase_Dtd"/>
    <property type="match status" value="1"/>
</dbReference>
<dbReference type="InterPro" id="IPR003732">
    <property type="entry name" value="Daa-tRNA_deacyls_DTD"/>
</dbReference>
<dbReference type="InterPro" id="IPR023509">
    <property type="entry name" value="DTD-like_sf"/>
</dbReference>
<dbReference type="NCBIfam" id="TIGR00256">
    <property type="entry name" value="D-aminoacyl-tRNA deacylase"/>
    <property type="match status" value="1"/>
</dbReference>
<dbReference type="PANTHER" id="PTHR10472:SF5">
    <property type="entry name" value="D-AMINOACYL-TRNA DEACYLASE 1"/>
    <property type="match status" value="1"/>
</dbReference>
<dbReference type="PANTHER" id="PTHR10472">
    <property type="entry name" value="D-TYROSYL-TRNA TYR DEACYLASE"/>
    <property type="match status" value="1"/>
</dbReference>
<dbReference type="Pfam" id="PF02580">
    <property type="entry name" value="Tyr_Deacylase"/>
    <property type="match status" value="1"/>
</dbReference>
<dbReference type="SUPFAM" id="SSF69500">
    <property type="entry name" value="DTD-like"/>
    <property type="match status" value="1"/>
</dbReference>
<organism>
    <name type="scientific">Burkholderia multivorans (strain ATCC 17616 / 249)</name>
    <dbReference type="NCBI Taxonomy" id="395019"/>
    <lineage>
        <taxon>Bacteria</taxon>
        <taxon>Pseudomonadati</taxon>
        <taxon>Pseudomonadota</taxon>
        <taxon>Betaproteobacteria</taxon>
        <taxon>Burkholderiales</taxon>
        <taxon>Burkholderiaceae</taxon>
        <taxon>Burkholderia</taxon>
        <taxon>Burkholderia cepacia complex</taxon>
    </lineage>
</organism>
<reference key="1">
    <citation type="submission" date="2007-10" db="EMBL/GenBank/DDBJ databases">
        <title>Complete sequence of chromosome 1 of Burkholderia multivorans ATCC 17616.</title>
        <authorList>
            <person name="Copeland A."/>
            <person name="Lucas S."/>
            <person name="Lapidus A."/>
            <person name="Barry K."/>
            <person name="Glavina del Rio T."/>
            <person name="Dalin E."/>
            <person name="Tice H."/>
            <person name="Pitluck S."/>
            <person name="Chain P."/>
            <person name="Malfatti S."/>
            <person name="Shin M."/>
            <person name="Vergez L."/>
            <person name="Schmutz J."/>
            <person name="Larimer F."/>
            <person name="Land M."/>
            <person name="Hauser L."/>
            <person name="Kyrpides N."/>
            <person name="Kim E."/>
            <person name="Tiedje J."/>
            <person name="Richardson P."/>
        </authorList>
    </citation>
    <scope>NUCLEOTIDE SEQUENCE [LARGE SCALE GENOMIC DNA]</scope>
    <source>
        <strain>ATCC 17616 / 249</strain>
    </source>
</reference>
<reference key="2">
    <citation type="submission" date="2007-04" db="EMBL/GenBank/DDBJ databases">
        <title>Complete genome sequence of Burkholderia multivorans ATCC 17616.</title>
        <authorList>
            <person name="Ohtsubo Y."/>
            <person name="Yamashita A."/>
            <person name="Kurokawa K."/>
            <person name="Takami H."/>
            <person name="Yuhara S."/>
            <person name="Nishiyama E."/>
            <person name="Endo R."/>
            <person name="Miyazaki R."/>
            <person name="Ono A."/>
            <person name="Yano K."/>
            <person name="Ito M."/>
            <person name="Sota M."/>
            <person name="Yuji N."/>
            <person name="Hattori M."/>
            <person name="Tsuda M."/>
        </authorList>
    </citation>
    <scope>NUCLEOTIDE SEQUENCE [LARGE SCALE GENOMIC DNA]</scope>
    <source>
        <strain>ATCC 17616 / 249</strain>
    </source>
</reference>
<evidence type="ECO:0000255" key="1">
    <source>
        <dbReference type="HAMAP-Rule" id="MF_00518"/>
    </source>
</evidence>
<accession>A9AH76</accession>